<keyword id="KW-0067">ATP-binding</keyword>
<keyword id="KW-0963">Cytoplasm</keyword>
<keyword id="KW-1015">Disulfide bond</keyword>
<keyword id="KW-0547">Nucleotide-binding</keyword>
<keyword id="KW-0694">RNA-binding</keyword>
<keyword id="KW-0808">Transferase</keyword>
<keyword id="KW-0819">tRNA processing</keyword>
<keyword id="KW-0820">tRNA-binding</keyword>
<dbReference type="EC" id="2.8.1.13" evidence="1"/>
<dbReference type="EMBL" id="CP000521">
    <property type="protein sequence ID" value="ABO12857.1"/>
    <property type="status" value="ALT_FRAME"/>
    <property type="molecule type" value="Genomic_DNA"/>
</dbReference>
<dbReference type="RefSeq" id="WP_001187604.1">
    <property type="nucleotide sequence ID" value="NZ_CP053098.1"/>
</dbReference>
<dbReference type="SMR" id="A3M7G3"/>
<dbReference type="GeneID" id="92894744"/>
<dbReference type="KEGG" id="acb:A1S_2439"/>
<dbReference type="HOGENOM" id="CLU_035188_4_0_6"/>
<dbReference type="GO" id="GO:0005737">
    <property type="term" value="C:cytoplasm"/>
    <property type="evidence" value="ECO:0007669"/>
    <property type="project" value="UniProtKB-SubCell"/>
</dbReference>
<dbReference type="GO" id="GO:0005524">
    <property type="term" value="F:ATP binding"/>
    <property type="evidence" value="ECO:0007669"/>
    <property type="project" value="UniProtKB-KW"/>
</dbReference>
<dbReference type="GO" id="GO:0000049">
    <property type="term" value="F:tRNA binding"/>
    <property type="evidence" value="ECO:0007669"/>
    <property type="project" value="UniProtKB-KW"/>
</dbReference>
<dbReference type="GO" id="GO:0103016">
    <property type="term" value="F:tRNA-uridine 2-sulfurtransferase activity"/>
    <property type="evidence" value="ECO:0007669"/>
    <property type="project" value="UniProtKB-EC"/>
</dbReference>
<dbReference type="GO" id="GO:0002143">
    <property type="term" value="P:tRNA wobble position uridine thiolation"/>
    <property type="evidence" value="ECO:0007669"/>
    <property type="project" value="TreeGrafter"/>
</dbReference>
<dbReference type="CDD" id="cd01998">
    <property type="entry name" value="MnmA_TRMU-like"/>
    <property type="match status" value="1"/>
</dbReference>
<dbReference type="FunFam" id="2.30.30.280:FF:000001">
    <property type="entry name" value="tRNA-specific 2-thiouridylase MnmA"/>
    <property type="match status" value="1"/>
</dbReference>
<dbReference type="FunFam" id="2.40.30.10:FF:000023">
    <property type="entry name" value="tRNA-specific 2-thiouridylase MnmA"/>
    <property type="match status" value="1"/>
</dbReference>
<dbReference type="FunFam" id="3.40.50.620:FF:000004">
    <property type="entry name" value="tRNA-specific 2-thiouridylase MnmA"/>
    <property type="match status" value="1"/>
</dbReference>
<dbReference type="Gene3D" id="2.30.30.280">
    <property type="entry name" value="Adenine nucleotide alpha hydrolases-like domains"/>
    <property type="match status" value="1"/>
</dbReference>
<dbReference type="Gene3D" id="3.40.50.620">
    <property type="entry name" value="HUPs"/>
    <property type="match status" value="1"/>
</dbReference>
<dbReference type="Gene3D" id="2.40.30.10">
    <property type="entry name" value="Translation factors"/>
    <property type="match status" value="1"/>
</dbReference>
<dbReference type="HAMAP" id="MF_00144">
    <property type="entry name" value="tRNA_thiouridyl_MnmA"/>
    <property type="match status" value="1"/>
</dbReference>
<dbReference type="InterPro" id="IPR004506">
    <property type="entry name" value="MnmA-like"/>
</dbReference>
<dbReference type="InterPro" id="IPR046885">
    <property type="entry name" value="MnmA-like_C"/>
</dbReference>
<dbReference type="InterPro" id="IPR046884">
    <property type="entry name" value="MnmA-like_central"/>
</dbReference>
<dbReference type="InterPro" id="IPR023382">
    <property type="entry name" value="MnmA-like_central_sf"/>
</dbReference>
<dbReference type="InterPro" id="IPR014729">
    <property type="entry name" value="Rossmann-like_a/b/a_fold"/>
</dbReference>
<dbReference type="NCBIfam" id="NF001138">
    <property type="entry name" value="PRK00143.1"/>
    <property type="match status" value="1"/>
</dbReference>
<dbReference type="NCBIfam" id="TIGR00420">
    <property type="entry name" value="trmU"/>
    <property type="match status" value="1"/>
</dbReference>
<dbReference type="PANTHER" id="PTHR11933:SF5">
    <property type="entry name" value="MITOCHONDRIAL TRNA-SPECIFIC 2-THIOURIDYLASE 1"/>
    <property type="match status" value="1"/>
</dbReference>
<dbReference type="PANTHER" id="PTHR11933">
    <property type="entry name" value="TRNA 5-METHYLAMINOMETHYL-2-THIOURIDYLATE -METHYLTRANSFERASE"/>
    <property type="match status" value="1"/>
</dbReference>
<dbReference type="Pfam" id="PF03054">
    <property type="entry name" value="tRNA_Me_trans"/>
    <property type="match status" value="1"/>
</dbReference>
<dbReference type="Pfam" id="PF20258">
    <property type="entry name" value="tRNA_Me_trans_C"/>
    <property type="match status" value="1"/>
</dbReference>
<dbReference type="Pfam" id="PF20259">
    <property type="entry name" value="tRNA_Me_trans_M"/>
    <property type="match status" value="1"/>
</dbReference>
<dbReference type="SUPFAM" id="SSF52402">
    <property type="entry name" value="Adenine nucleotide alpha hydrolases-like"/>
    <property type="match status" value="1"/>
</dbReference>
<sequence>MQQRVIVGMSGGVDSSVSAALLLQQGYQVEGLFMKNWEEDDGTEYCTAMEDLADAQAVADKIGIKLHTANFAMEYWDRVFEHFLAEYAAGRTPNPDILCNKEIKFRAFLDHAMTLGADFIATGHYARRAETAYNSKGEAYAPLLRGLDNNKDQTYFLHAVHGREINKTLFPVGEIEKPEVRRIAEELDLATAKKKDSTGICFIGERRFNDFLKQYLPAQPGKIVLDNGKEVGEHHGLMYYTLGQRGGIGLGGMKGASEGAWFVLHKDVANNRLVVGQGHDHPLMQSTQLWSEAIDWVAGEQNIPAEGLRCTAKTRYRQPDQACTVFIDENSEHGVRVEFDEPQRAVTPGQSVVFYSDEVCLGGGVIHHTNAPTPNFI</sequence>
<organism>
    <name type="scientific">Acinetobacter baumannii (strain ATCC 17978 / DSM 105126 / CIP 53.77 / LMG 1025 / NCDC KC755 / 5377)</name>
    <dbReference type="NCBI Taxonomy" id="400667"/>
    <lineage>
        <taxon>Bacteria</taxon>
        <taxon>Pseudomonadati</taxon>
        <taxon>Pseudomonadota</taxon>
        <taxon>Gammaproteobacteria</taxon>
        <taxon>Moraxellales</taxon>
        <taxon>Moraxellaceae</taxon>
        <taxon>Acinetobacter</taxon>
        <taxon>Acinetobacter calcoaceticus/baumannii complex</taxon>
    </lineage>
</organism>
<protein>
    <recommendedName>
        <fullName evidence="1">tRNA-specific 2-thiouridylase MnmA</fullName>
        <ecNumber evidence="1">2.8.1.13</ecNumber>
    </recommendedName>
</protein>
<reference key="1">
    <citation type="journal article" date="2007" name="Genes Dev.">
        <title>New insights into Acinetobacter baumannii pathogenesis revealed by high-density pyrosequencing and transposon mutagenesis.</title>
        <authorList>
            <person name="Smith M.G."/>
            <person name="Gianoulis T.A."/>
            <person name="Pukatzki S."/>
            <person name="Mekalanos J.J."/>
            <person name="Ornston L.N."/>
            <person name="Gerstein M."/>
            <person name="Snyder M."/>
        </authorList>
    </citation>
    <scope>NUCLEOTIDE SEQUENCE [LARGE SCALE GENOMIC DNA]</scope>
    <source>
        <strain>ATCC 17978 / DSM 105126 / CIP 53.77 / LMG 1025 / NCDC KC755 / 5377</strain>
    </source>
</reference>
<comment type="function">
    <text evidence="1">Catalyzes the 2-thiolation of uridine at the wobble position (U34) of tRNA, leading to the formation of s(2)U34.</text>
</comment>
<comment type="catalytic activity">
    <reaction evidence="1">
        <text>S-sulfanyl-L-cysteinyl-[protein] + uridine(34) in tRNA + AH2 + ATP = 2-thiouridine(34) in tRNA + L-cysteinyl-[protein] + A + AMP + diphosphate + H(+)</text>
        <dbReference type="Rhea" id="RHEA:47032"/>
        <dbReference type="Rhea" id="RHEA-COMP:10131"/>
        <dbReference type="Rhea" id="RHEA-COMP:11726"/>
        <dbReference type="Rhea" id="RHEA-COMP:11727"/>
        <dbReference type="Rhea" id="RHEA-COMP:11728"/>
        <dbReference type="ChEBI" id="CHEBI:13193"/>
        <dbReference type="ChEBI" id="CHEBI:15378"/>
        <dbReference type="ChEBI" id="CHEBI:17499"/>
        <dbReference type="ChEBI" id="CHEBI:29950"/>
        <dbReference type="ChEBI" id="CHEBI:30616"/>
        <dbReference type="ChEBI" id="CHEBI:33019"/>
        <dbReference type="ChEBI" id="CHEBI:61963"/>
        <dbReference type="ChEBI" id="CHEBI:65315"/>
        <dbReference type="ChEBI" id="CHEBI:87170"/>
        <dbReference type="ChEBI" id="CHEBI:456215"/>
        <dbReference type="EC" id="2.8.1.13"/>
    </reaction>
</comment>
<comment type="subcellular location">
    <subcellularLocation>
        <location evidence="1">Cytoplasm</location>
    </subcellularLocation>
</comment>
<comment type="similarity">
    <text evidence="1">Belongs to the MnmA/TRMU family.</text>
</comment>
<comment type="sequence caution" evidence="2">
    <conflict type="frameshift">
        <sequence resource="EMBL-CDS" id="ABO12857"/>
    </conflict>
</comment>
<evidence type="ECO:0000255" key="1">
    <source>
        <dbReference type="HAMAP-Rule" id="MF_00144"/>
    </source>
</evidence>
<evidence type="ECO:0000305" key="2"/>
<proteinExistence type="inferred from homology"/>
<gene>
    <name evidence="1" type="primary">mnmA</name>
    <name type="ordered locus">A1S_2439</name>
</gene>
<accession>A3M7G3</accession>
<feature type="chain" id="PRO_0000349499" description="tRNA-specific 2-thiouridylase MnmA">
    <location>
        <begin position="1"/>
        <end position="377"/>
    </location>
</feature>
<feature type="region of interest" description="Interaction with target base in tRNA" evidence="1">
    <location>
        <begin position="94"/>
        <end position="96"/>
    </location>
</feature>
<feature type="region of interest" description="Interaction with tRNA" evidence="1">
    <location>
        <begin position="151"/>
        <end position="153"/>
    </location>
</feature>
<feature type="region of interest" description="Interaction with tRNA" evidence="1">
    <location>
        <begin position="315"/>
        <end position="316"/>
    </location>
</feature>
<feature type="active site" description="Nucleophile" evidence="1">
    <location>
        <position position="99"/>
    </location>
</feature>
<feature type="active site" description="Cysteine persulfide intermediate" evidence="1">
    <location>
        <position position="201"/>
    </location>
</feature>
<feature type="binding site" evidence="1">
    <location>
        <begin position="8"/>
        <end position="15"/>
    </location>
    <ligand>
        <name>ATP</name>
        <dbReference type="ChEBI" id="CHEBI:30616"/>
    </ligand>
</feature>
<feature type="binding site" evidence="1">
    <location>
        <position position="34"/>
    </location>
    <ligand>
        <name>ATP</name>
        <dbReference type="ChEBI" id="CHEBI:30616"/>
    </ligand>
</feature>
<feature type="binding site" evidence="1">
    <location>
        <position position="123"/>
    </location>
    <ligand>
        <name>ATP</name>
        <dbReference type="ChEBI" id="CHEBI:30616"/>
    </ligand>
</feature>
<feature type="site" description="Interaction with tRNA" evidence="1">
    <location>
        <position position="124"/>
    </location>
</feature>
<feature type="site" description="Interaction with tRNA" evidence="1">
    <location>
        <position position="350"/>
    </location>
</feature>
<feature type="disulfide bond" description="Alternate" evidence="1">
    <location>
        <begin position="99"/>
        <end position="201"/>
    </location>
</feature>
<name>MNMA_ACIBT</name>